<evidence type="ECO:0000255" key="1">
    <source>
        <dbReference type="HAMAP-Rule" id="MF_01390"/>
    </source>
</evidence>
<geneLocation type="chloroplast"/>
<organism>
    <name type="scientific">Cephalotaxus fortunei</name>
    <name type="common">Chinese plum-yew</name>
    <dbReference type="NCBI Taxonomy" id="66169"/>
    <lineage>
        <taxon>Eukaryota</taxon>
        <taxon>Viridiplantae</taxon>
        <taxon>Streptophyta</taxon>
        <taxon>Embryophyta</taxon>
        <taxon>Tracheophyta</taxon>
        <taxon>Spermatophyta</taxon>
        <taxon>Pinopsida</taxon>
        <taxon>Pinidae</taxon>
        <taxon>Conifers II</taxon>
        <taxon>Cupressales</taxon>
        <taxon>Taxaceae</taxon>
        <taxon>Cephalotaxus</taxon>
    </lineage>
</organism>
<comment type="function">
    <text evidence="1">Usually encoded in the trnK tRNA gene intron. Probably assists in splicing its own and other chloroplast group II introns.</text>
</comment>
<comment type="subcellular location">
    <subcellularLocation>
        <location>Plastid</location>
        <location>Chloroplast</location>
    </subcellularLocation>
</comment>
<comment type="similarity">
    <text evidence="1">Belongs to the intron maturase 2 family. MatK subfamily.</text>
</comment>
<reference key="1">
    <citation type="journal article" date="2000" name="Zhi Wu Fen Lei Xue Bao">
        <title>Chloroplast matK gene phylogeny of Taxaceae and Cephalotaxaceae, with additional reference to the systematic position of Nageia.</title>
        <authorList>
            <person name="Wang X.-Q."/>
            <person name="Shu Y.-Q."/>
        </authorList>
    </citation>
    <scope>NUCLEOTIDE SEQUENCE [GENOMIC DNA]</scope>
</reference>
<protein>
    <recommendedName>
        <fullName evidence="1">Maturase K</fullName>
    </recommendedName>
    <alternativeName>
        <fullName evidence="1">Intron maturase</fullName>
    </alternativeName>
</protein>
<sequence>MDEFQRDGKKNRSWQQCFLYPLFFREDLYAIAHDHNLDRSSSSEPTEILNSNYFSFLTVKRLIRRIRQQNDSIVLFGICDPNQFIDRNRNSYSESVLEGLTVVLEVSFAMRSKHFLEGMDGWKSIRSIHSIFPLMEDKFPHSNYISDIRVPYSIHPEILVRTFRRWIRDAPFLDLLRSILHEWRNSFSAENLQKALVAPGENMRFPLFLWNSYIYECESFLVPLLKRFYTSRSLVYGSFPDRTDFDRKIKHIFTFPVKISTKRIWWMKDSFIHYVRYGERSLIALKGTHLQVKKCRYHLFHFWQCYFHLWSQSYRVSILELSRNYSYFLGFFIRFKMKSLVVRTKMIDSLLTTDLITNELNPIAPIRSILLFLAKERFCDISGRPISRLSWTSLSDDDILDRFDRIWINLFHYYSGSINKDSLYHIKYILLLSCAKTLACKHKSTIRLVREEPGSELFTKSFSKEREFIYSSFSKTRSQRERIWNSDILQINPLANSYTINK</sequence>
<accession>Q9MSA7</accession>
<name>MATK_CEPFR</name>
<proteinExistence type="inferred from homology"/>
<feature type="chain" id="PRO_0000143318" description="Maturase K">
    <location>
        <begin position="1"/>
        <end position="502"/>
    </location>
</feature>
<dbReference type="EMBL" id="AF228109">
    <property type="protein sequence ID" value="AAF77113.1"/>
    <property type="molecule type" value="Genomic_DNA"/>
</dbReference>
<dbReference type="GO" id="GO:0009507">
    <property type="term" value="C:chloroplast"/>
    <property type="evidence" value="ECO:0007669"/>
    <property type="project" value="UniProtKB-SubCell"/>
</dbReference>
<dbReference type="GO" id="GO:0003723">
    <property type="term" value="F:RNA binding"/>
    <property type="evidence" value="ECO:0007669"/>
    <property type="project" value="UniProtKB-KW"/>
</dbReference>
<dbReference type="GO" id="GO:0006397">
    <property type="term" value="P:mRNA processing"/>
    <property type="evidence" value="ECO:0007669"/>
    <property type="project" value="UniProtKB-KW"/>
</dbReference>
<dbReference type="GO" id="GO:0008380">
    <property type="term" value="P:RNA splicing"/>
    <property type="evidence" value="ECO:0007669"/>
    <property type="project" value="UniProtKB-UniRule"/>
</dbReference>
<dbReference type="GO" id="GO:0008033">
    <property type="term" value="P:tRNA processing"/>
    <property type="evidence" value="ECO:0007669"/>
    <property type="project" value="UniProtKB-KW"/>
</dbReference>
<dbReference type="HAMAP" id="MF_01390">
    <property type="entry name" value="MatK"/>
    <property type="match status" value="1"/>
</dbReference>
<dbReference type="InterPro" id="IPR024937">
    <property type="entry name" value="Domain_X"/>
</dbReference>
<dbReference type="InterPro" id="IPR002866">
    <property type="entry name" value="Maturase_MatK"/>
</dbReference>
<dbReference type="InterPro" id="IPR024942">
    <property type="entry name" value="Maturase_MatK_N"/>
</dbReference>
<dbReference type="PANTHER" id="PTHR34811">
    <property type="entry name" value="MATURASE K"/>
    <property type="match status" value="1"/>
</dbReference>
<dbReference type="PANTHER" id="PTHR34811:SF1">
    <property type="entry name" value="MATURASE K"/>
    <property type="match status" value="1"/>
</dbReference>
<dbReference type="Pfam" id="PF01348">
    <property type="entry name" value="Intron_maturas2"/>
    <property type="match status" value="1"/>
</dbReference>
<dbReference type="Pfam" id="PF01824">
    <property type="entry name" value="MatK_N"/>
    <property type="match status" value="1"/>
</dbReference>
<gene>
    <name evidence="1" type="primary">matK</name>
</gene>
<keyword id="KW-0150">Chloroplast</keyword>
<keyword id="KW-0507">mRNA processing</keyword>
<keyword id="KW-0934">Plastid</keyword>
<keyword id="KW-0694">RNA-binding</keyword>
<keyword id="KW-0819">tRNA processing</keyword>